<gene>
    <name evidence="3" type="primary">KCNS1</name>
</gene>
<sequence>MLMLLVRGTHYENLRPKVVLPTPLVGRSTETFVSEFPGPDTGIRWRRSDEALRVNVGGVRRQLSARALARFPGTRLGRLQAAASEEQARRLCDDYDEAAREFYFDRHPGFFLGLLHFYRTGHLHVLDELCVFAFGQEADYWGLGENALAACCRARYLERRLTQPHAWDEDSDTPSSVDPCPDEISDVQRELARYGAARCGRLRRRLWLTMENPGYSLPSKLFSCVSISVVLASIAAMCIHSLPEYQAREAAAAVAAVAAGRSPEGVRDDPVLRRLEYFCIAWFSFEVSSRLLLAPSTRNFFCHPLNLIDIVSVLPFYLTLLAGVALGDQGGKEFGHLGKVVQVFRLMRIFRVLKLARHSTGLRSLGATLKHSYREVGILLLYLAVGVSVFSGVAYTAEKEEDVGFNTIPACWWWGTVSMTTVGYGDVVPVTVAGKLAASGCILGGILVVALPITIIFNKFSHFYRRQKALEAAVRNSNHREFEDLLSSVDGVSEASLETSRETSQEGRSADLESQAPSEPPHPQMY</sequence>
<accession>A4K2V2</accession>
<protein>
    <recommendedName>
        <fullName evidence="3">Delayed-rectifier potassium channel regulatory subunit KCNS1</fullName>
    </recommendedName>
    <alternativeName>
        <fullName>Delayed-rectifier K(+) channel alpha subunit 1</fullName>
    </alternativeName>
    <alternativeName>
        <fullName evidence="3">Delayed-rectifier potassium channel subunit Kv9.1</fullName>
    </alternativeName>
</protein>
<name>KCNS1_PONAB</name>
<dbReference type="EMBL" id="DP000045">
    <property type="protein sequence ID" value="ABO52987.1"/>
    <property type="molecule type" value="Genomic_DNA"/>
</dbReference>
<dbReference type="RefSeq" id="NP_001162032.1">
    <property type="nucleotide sequence ID" value="NM_001168560.1"/>
</dbReference>
<dbReference type="RefSeq" id="XP_009231898.1">
    <property type="nucleotide sequence ID" value="XM_009233623.1"/>
</dbReference>
<dbReference type="RefSeq" id="XP_009231899.1">
    <property type="nucleotide sequence ID" value="XM_009233624.1"/>
</dbReference>
<dbReference type="RefSeq" id="XP_054397345.1">
    <property type="nucleotide sequence ID" value="XM_054541370.2"/>
</dbReference>
<dbReference type="SMR" id="A4K2V2"/>
<dbReference type="FunCoup" id="A4K2V2">
    <property type="interactions" value="31"/>
</dbReference>
<dbReference type="STRING" id="9601.ENSPPYP00000012337"/>
<dbReference type="Ensembl" id="ENSPPYT00000012819.3">
    <property type="protein sequence ID" value="ENSPPYP00000012337.2"/>
    <property type="gene ID" value="ENSPPYG00000011046.3"/>
</dbReference>
<dbReference type="GeneID" id="100137179"/>
<dbReference type="KEGG" id="pon:100137179"/>
<dbReference type="CTD" id="3787"/>
<dbReference type="eggNOG" id="KOG3713">
    <property type="taxonomic scope" value="Eukaryota"/>
</dbReference>
<dbReference type="GeneTree" id="ENSGT00940000160096"/>
<dbReference type="HOGENOM" id="CLU_011722_4_1_1"/>
<dbReference type="InParanoid" id="A4K2V2"/>
<dbReference type="OMA" id="CSGRYHE"/>
<dbReference type="OrthoDB" id="296522at2759"/>
<dbReference type="TreeFam" id="TF313103"/>
<dbReference type="Proteomes" id="UP000001595">
    <property type="component" value="Chromosome 20"/>
</dbReference>
<dbReference type="GO" id="GO:0005654">
    <property type="term" value="C:nucleoplasm"/>
    <property type="evidence" value="ECO:0007669"/>
    <property type="project" value="Ensembl"/>
</dbReference>
<dbReference type="GO" id="GO:0048471">
    <property type="term" value="C:perinuclear region of cytoplasm"/>
    <property type="evidence" value="ECO:0000250"/>
    <property type="project" value="UniProtKB"/>
</dbReference>
<dbReference type="GO" id="GO:0005886">
    <property type="term" value="C:plasma membrane"/>
    <property type="evidence" value="ECO:0000250"/>
    <property type="project" value="UniProtKB"/>
</dbReference>
<dbReference type="GO" id="GO:0008076">
    <property type="term" value="C:voltage-gated potassium channel complex"/>
    <property type="evidence" value="ECO:0000250"/>
    <property type="project" value="UniProtKB"/>
</dbReference>
<dbReference type="GO" id="GO:0005251">
    <property type="term" value="F:delayed rectifier potassium channel activity"/>
    <property type="evidence" value="ECO:0007669"/>
    <property type="project" value="TreeGrafter"/>
</dbReference>
<dbReference type="GO" id="GO:0015459">
    <property type="term" value="F:potassium channel regulator activity"/>
    <property type="evidence" value="ECO:0000250"/>
    <property type="project" value="UniProtKB"/>
</dbReference>
<dbReference type="GO" id="GO:0001508">
    <property type="term" value="P:action potential"/>
    <property type="evidence" value="ECO:0007669"/>
    <property type="project" value="TreeGrafter"/>
</dbReference>
<dbReference type="GO" id="GO:0006813">
    <property type="term" value="P:potassium ion transport"/>
    <property type="evidence" value="ECO:0000250"/>
    <property type="project" value="UniProtKB"/>
</dbReference>
<dbReference type="GO" id="GO:0051260">
    <property type="term" value="P:protein homooligomerization"/>
    <property type="evidence" value="ECO:0007669"/>
    <property type="project" value="InterPro"/>
</dbReference>
<dbReference type="GO" id="GO:1901379">
    <property type="term" value="P:regulation of potassium ion transmembrane transport"/>
    <property type="evidence" value="ECO:0000250"/>
    <property type="project" value="UniProtKB"/>
</dbReference>
<dbReference type="FunFam" id="1.10.287.70:FF:000005">
    <property type="entry name" value="potassium voltage-gated channel subfamily G member 1"/>
    <property type="match status" value="1"/>
</dbReference>
<dbReference type="FunFam" id="3.30.710.10:FF:000102">
    <property type="entry name" value="Potassium voltage-gated channel subfamily S member 1"/>
    <property type="match status" value="1"/>
</dbReference>
<dbReference type="FunFam" id="1.20.120.350:FF:000029">
    <property type="entry name" value="Potassium voltage-gated channel subfamily S member 2"/>
    <property type="match status" value="1"/>
</dbReference>
<dbReference type="Gene3D" id="1.10.287.70">
    <property type="match status" value="1"/>
</dbReference>
<dbReference type="Gene3D" id="3.30.710.10">
    <property type="entry name" value="Potassium Channel Kv1.1, Chain A"/>
    <property type="match status" value="1"/>
</dbReference>
<dbReference type="Gene3D" id="1.20.120.350">
    <property type="entry name" value="Voltage-gated potassium channels. Chain C"/>
    <property type="match status" value="1"/>
</dbReference>
<dbReference type="InterPro" id="IPR000210">
    <property type="entry name" value="BTB/POZ_dom"/>
</dbReference>
<dbReference type="InterPro" id="IPR005821">
    <property type="entry name" value="Ion_trans_dom"/>
</dbReference>
<dbReference type="InterPro" id="IPR003968">
    <property type="entry name" value="K_chnl_volt-dep_Kv"/>
</dbReference>
<dbReference type="InterPro" id="IPR003971">
    <property type="entry name" value="K_chnl_volt-dep_Kv5/Kv9"/>
</dbReference>
<dbReference type="InterPro" id="IPR011333">
    <property type="entry name" value="SKP1/BTB/POZ_sf"/>
</dbReference>
<dbReference type="InterPro" id="IPR003131">
    <property type="entry name" value="T1-type_BTB"/>
</dbReference>
<dbReference type="InterPro" id="IPR028325">
    <property type="entry name" value="VG_K_chnl"/>
</dbReference>
<dbReference type="InterPro" id="IPR027359">
    <property type="entry name" value="Volt_channel_dom_sf"/>
</dbReference>
<dbReference type="PANTHER" id="PTHR11537:SF61">
    <property type="entry name" value="POTASSIUM VOLTAGE-GATED CHANNEL SUBFAMILY S MEMBER 1"/>
    <property type="match status" value="1"/>
</dbReference>
<dbReference type="PANTHER" id="PTHR11537">
    <property type="entry name" value="VOLTAGE-GATED POTASSIUM CHANNEL"/>
    <property type="match status" value="1"/>
</dbReference>
<dbReference type="Pfam" id="PF02214">
    <property type="entry name" value="BTB_2"/>
    <property type="match status" value="1"/>
</dbReference>
<dbReference type="Pfam" id="PF00520">
    <property type="entry name" value="Ion_trans"/>
    <property type="match status" value="1"/>
</dbReference>
<dbReference type="PRINTS" id="PR00169">
    <property type="entry name" value="KCHANNEL"/>
</dbReference>
<dbReference type="PRINTS" id="PR01494">
    <property type="entry name" value="KV9CHANNEL"/>
</dbReference>
<dbReference type="PRINTS" id="PR01491">
    <property type="entry name" value="KVCHANNEL"/>
</dbReference>
<dbReference type="SMART" id="SM00225">
    <property type="entry name" value="BTB"/>
    <property type="match status" value="1"/>
</dbReference>
<dbReference type="SUPFAM" id="SSF54695">
    <property type="entry name" value="POZ domain"/>
    <property type="match status" value="1"/>
</dbReference>
<dbReference type="SUPFAM" id="SSF81324">
    <property type="entry name" value="Voltage-gated potassium channels"/>
    <property type="match status" value="1"/>
</dbReference>
<proteinExistence type="inferred from homology"/>
<evidence type="ECO:0000250" key="1">
    <source>
        <dbReference type="UniProtKB" id="O35173"/>
    </source>
</evidence>
<evidence type="ECO:0000250" key="2">
    <source>
        <dbReference type="UniProtKB" id="P63142"/>
    </source>
</evidence>
<evidence type="ECO:0000250" key="3">
    <source>
        <dbReference type="UniProtKB" id="Q96KK3"/>
    </source>
</evidence>
<evidence type="ECO:0000256" key="4">
    <source>
        <dbReference type="SAM" id="MobiDB-lite"/>
    </source>
</evidence>
<evidence type="ECO:0000305" key="5"/>
<comment type="function">
    <text evidence="1 3">Potassium channel regulatory subunit that modulate the delayed rectifier voltage-gated potassium channel activity of KCNB1 and KCNB2 by altering their kinetics, expression levels, and shifting the half-inactivation potential to more polarized values. While it does not form functional channels on its own, it can form functional heterotetrameric channels with KCNB1 and KCNB2 (By similarity). Each regulatory subunit has unique regulatory properties that can lead to extensive inhibition, significant changes in kinetics, and/or substantial shifts in the voltage dependencies of the inactivation process (By similarity).</text>
</comment>
<comment type="subunit">
    <text evidence="1 3">Heterotetramer with KCNB1 (By similarity). Heterotetramer with KCNB2 (By similarity). Does not form homomultimers (By similarity).</text>
</comment>
<comment type="subcellular location">
    <subcellularLocation>
        <location evidence="3">Cell membrane</location>
        <topology evidence="3">Multi-pass membrane protein</topology>
    </subcellularLocation>
    <text evidence="3">May not reach the plasma membrane but remain in an intracellular compartment in the absence of KCNB1 or KCNB2.</text>
</comment>
<comment type="domain">
    <text evidence="2">The transmembrane segment S4 functions as a voltage-sensor and is characterized by a series of positively charged amino acids at every third position. Channel opening and closing is effected by a conformation change that affects the position and orientation of the voltage-sensor paddle formed by S3 and S4 within the membrane. A transmembrane electric field that is positive inside would push the positively charged S4 segment outwards, thereby opening the pore, while a field that is negative inside would pull the S4 segment inwards and close the pore. Changes in the position and orientation of S4 are then transmitted to the activation gate formed by the inner helix bundle via the S4-S5 linker region.</text>
</comment>
<comment type="similarity">
    <text evidence="5">Belongs to the potassium channel family. S (TC 1.A.1.2) subfamily. Kv9.1/KCNS1 sub-subfamily.</text>
</comment>
<organism>
    <name type="scientific">Pongo abelii</name>
    <name type="common">Sumatran orangutan</name>
    <name type="synonym">Pongo pygmaeus abelii</name>
    <dbReference type="NCBI Taxonomy" id="9601"/>
    <lineage>
        <taxon>Eukaryota</taxon>
        <taxon>Metazoa</taxon>
        <taxon>Chordata</taxon>
        <taxon>Craniata</taxon>
        <taxon>Vertebrata</taxon>
        <taxon>Euteleostomi</taxon>
        <taxon>Mammalia</taxon>
        <taxon>Eutheria</taxon>
        <taxon>Euarchontoglires</taxon>
        <taxon>Primates</taxon>
        <taxon>Haplorrhini</taxon>
        <taxon>Catarrhini</taxon>
        <taxon>Hominidae</taxon>
        <taxon>Pongo</taxon>
    </lineage>
</organism>
<reference key="1">
    <citation type="journal article" date="2007" name="Genome Res.">
        <title>Comparative sequence analyses reveal rapid and divergent evolutionary changes of the WFDC locus in the primate lineage.</title>
        <authorList>
            <consortium name="NISC comparative sequencing program"/>
            <person name="Hurle B."/>
            <person name="Swanson W."/>
            <person name="Green E.D."/>
        </authorList>
    </citation>
    <scope>NUCLEOTIDE SEQUENCE [GENOMIC DNA]</scope>
</reference>
<keyword id="KW-1003">Cell membrane</keyword>
<keyword id="KW-0407">Ion channel</keyword>
<keyword id="KW-0406">Ion transport</keyword>
<keyword id="KW-0472">Membrane</keyword>
<keyword id="KW-0630">Potassium</keyword>
<keyword id="KW-0631">Potassium channel</keyword>
<keyword id="KW-0633">Potassium transport</keyword>
<keyword id="KW-1185">Reference proteome</keyword>
<keyword id="KW-0812">Transmembrane</keyword>
<keyword id="KW-1133">Transmembrane helix</keyword>
<keyword id="KW-0813">Transport</keyword>
<keyword id="KW-0851">Voltage-gated channel</keyword>
<feature type="chain" id="PRO_0000289622" description="Delayed-rectifier potassium channel regulatory subunit KCNS1">
    <location>
        <begin position="1"/>
        <end position="526"/>
    </location>
</feature>
<feature type="topological domain" description="Cytoplasmic" evidence="2">
    <location>
        <begin position="1"/>
        <end position="217"/>
    </location>
</feature>
<feature type="transmembrane region" description="Helical; Name=Segment S1" evidence="2">
    <location>
        <begin position="218"/>
        <end position="239"/>
    </location>
</feature>
<feature type="topological domain" description="Extracellular" evidence="2">
    <location>
        <begin position="240"/>
        <end position="270"/>
    </location>
</feature>
<feature type="transmembrane region" description="Helical; Name=Segment S2" evidence="2">
    <location>
        <begin position="271"/>
        <end position="293"/>
    </location>
</feature>
<feature type="topological domain" description="Cytoplasmic" evidence="2">
    <location>
        <begin position="294"/>
        <end position="304"/>
    </location>
</feature>
<feature type="transmembrane region" description="Helical; Name=Segment S3" evidence="2">
    <location>
        <begin position="305"/>
        <end position="322"/>
    </location>
</feature>
<feature type="topological domain" description="Extracellular" evidence="2">
    <location>
        <begin position="323"/>
        <end position="337"/>
    </location>
</feature>
<feature type="transmembrane region" description="Helical; Voltage-sensor; Name=Segment S4" evidence="2">
    <location>
        <begin position="338"/>
        <end position="358"/>
    </location>
</feature>
<feature type="topological domain" description="Cytoplasmic" evidence="2">
    <location>
        <begin position="359"/>
        <end position="373"/>
    </location>
</feature>
<feature type="transmembrane region" description="Helical; Name=Segment S5" evidence="2">
    <location>
        <begin position="374"/>
        <end position="395"/>
    </location>
</feature>
<feature type="topological domain" description="Extracellular" evidence="2">
    <location>
        <begin position="396"/>
        <end position="408"/>
    </location>
</feature>
<feature type="intramembrane region" description="Helical; Name=Pore helix" evidence="2">
    <location>
        <begin position="409"/>
        <end position="420"/>
    </location>
</feature>
<feature type="intramembrane region" evidence="2">
    <location>
        <begin position="421"/>
        <end position="428"/>
    </location>
</feature>
<feature type="topological domain" description="Extracellular" evidence="2">
    <location>
        <begin position="429"/>
        <end position="435"/>
    </location>
</feature>
<feature type="transmembrane region" description="Helical; Name=Segment S6" evidence="2">
    <location>
        <begin position="436"/>
        <end position="464"/>
    </location>
</feature>
<feature type="topological domain" description="Cytoplasmic" evidence="2">
    <location>
        <begin position="465"/>
        <end position="526"/>
    </location>
</feature>
<feature type="region of interest" description="Disordered" evidence="4">
    <location>
        <begin position="491"/>
        <end position="526"/>
    </location>
</feature>
<feature type="short sequence motif" description="Selectivity filter" evidence="2">
    <location>
        <begin position="421"/>
        <end position="426"/>
    </location>
</feature>
<feature type="compositionally biased region" description="Basic and acidic residues" evidence="4">
    <location>
        <begin position="499"/>
        <end position="511"/>
    </location>
</feature>